<accession>A8FAD5</accession>
<protein>
    <recommendedName>
        <fullName evidence="1">Pyridoxal 5'-phosphate synthase subunit PdxS</fullName>
        <shortName evidence="1">PLP synthase subunit PdxS</shortName>
        <ecNumber evidence="1">4.3.3.6</ecNumber>
    </recommendedName>
    <alternativeName>
        <fullName evidence="1">Pdx1</fullName>
    </alternativeName>
</protein>
<evidence type="ECO:0000255" key="1">
    <source>
        <dbReference type="HAMAP-Rule" id="MF_01824"/>
    </source>
</evidence>
<feature type="chain" id="PRO_1000070364" description="Pyridoxal 5'-phosphate synthase subunit PdxS">
    <location>
        <begin position="1"/>
        <end position="294"/>
    </location>
</feature>
<feature type="active site" description="Schiff-base intermediate with D-ribose 5-phosphate" evidence="1">
    <location>
        <position position="81"/>
    </location>
</feature>
<feature type="binding site" evidence="1">
    <location>
        <position position="24"/>
    </location>
    <ligand>
        <name>D-ribose 5-phosphate</name>
        <dbReference type="ChEBI" id="CHEBI:78346"/>
    </ligand>
</feature>
<feature type="binding site" evidence="1">
    <location>
        <position position="153"/>
    </location>
    <ligand>
        <name>D-ribose 5-phosphate</name>
        <dbReference type="ChEBI" id="CHEBI:78346"/>
    </ligand>
</feature>
<feature type="binding site" evidence="1">
    <location>
        <position position="165"/>
    </location>
    <ligand>
        <name>D-glyceraldehyde 3-phosphate</name>
        <dbReference type="ChEBI" id="CHEBI:59776"/>
    </ligand>
</feature>
<feature type="binding site" evidence="1">
    <location>
        <position position="214"/>
    </location>
    <ligand>
        <name>D-ribose 5-phosphate</name>
        <dbReference type="ChEBI" id="CHEBI:78346"/>
    </ligand>
</feature>
<feature type="binding site" evidence="1">
    <location>
        <begin position="235"/>
        <end position="236"/>
    </location>
    <ligand>
        <name>D-ribose 5-phosphate</name>
        <dbReference type="ChEBI" id="CHEBI:78346"/>
    </ligand>
</feature>
<sequence length="294" mass="31590">MSNKGTERVKRGMAEMQKGGVIMDVVNAEQAKIAEEAGAVAVMALERVPADIRAAGGVARMADPRIVEEVQNAVTIPVMAKARIGHIVEARVLEALGVDYIDESEVLTPADEEFHLNKNEYTVPFVCGCRDLGEATRRIAEGASMLRTKGEPGTGNIVEAVRHMRKVNAQIRKVAAMSEDELMTEAKNLGAPYELLLQIKKDGKLPVVNFAAGGVATPADAALMMQLGADGVFVGSGIFKSDNPAKFAKAIVEATTHFTDYGLIAELSKELGTAMKGIEISNLLPEERMQERGW</sequence>
<comment type="function">
    <text evidence="1">Catalyzes the formation of pyridoxal 5'-phosphate from ribose 5-phosphate (RBP), glyceraldehyde 3-phosphate (G3P) and ammonia. The ammonia is provided by the PdxT subunit. Can also use ribulose 5-phosphate and dihydroxyacetone phosphate as substrates, resulting from enzyme-catalyzed isomerization of RBP and G3P, respectively.</text>
</comment>
<comment type="catalytic activity">
    <reaction evidence="1">
        <text>aldehydo-D-ribose 5-phosphate + D-glyceraldehyde 3-phosphate + L-glutamine = pyridoxal 5'-phosphate + L-glutamate + phosphate + 3 H2O + H(+)</text>
        <dbReference type="Rhea" id="RHEA:31507"/>
        <dbReference type="ChEBI" id="CHEBI:15377"/>
        <dbReference type="ChEBI" id="CHEBI:15378"/>
        <dbReference type="ChEBI" id="CHEBI:29985"/>
        <dbReference type="ChEBI" id="CHEBI:43474"/>
        <dbReference type="ChEBI" id="CHEBI:58273"/>
        <dbReference type="ChEBI" id="CHEBI:58359"/>
        <dbReference type="ChEBI" id="CHEBI:59776"/>
        <dbReference type="ChEBI" id="CHEBI:597326"/>
        <dbReference type="EC" id="4.3.3.6"/>
    </reaction>
</comment>
<comment type="pathway">
    <text evidence="1">Cofactor biosynthesis; pyridoxal 5'-phosphate biosynthesis.</text>
</comment>
<comment type="subunit">
    <text evidence="1">In the presence of PdxT, forms a dodecamer of heterodimers.</text>
</comment>
<comment type="similarity">
    <text evidence="1">Belongs to the PdxS/SNZ family.</text>
</comment>
<reference key="1">
    <citation type="journal article" date="2007" name="PLoS ONE">
        <title>Paradoxical DNA repair and peroxide resistance gene conservation in Bacillus pumilus SAFR-032.</title>
        <authorList>
            <person name="Gioia J."/>
            <person name="Yerrapragada S."/>
            <person name="Qin X."/>
            <person name="Jiang H."/>
            <person name="Igboeli O.C."/>
            <person name="Muzny D."/>
            <person name="Dugan-Rocha S."/>
            <person name="Ding Y."/>
            <person name="Hawes A."/>
            <person name="Liu W."/>
            <person name="Perez L."/>
            <person name="Kovar C."/>
            <person name="Dinh H."/>
            <person name="Lee S."/>
            <person name="Nazareth L."/>
            <person name="Blyth P."/>
            <person name="Holder M."/>
            <person name="Buhay C."/>
            <person name="Tirumalai M.R."/>
            <person name="Liu Y."/>
            <person name="Dasgupta I."/>
            <person name="Bokhetache L."/>
            <person name="Fujita M."/>
            <person name="Karouia F."/>
            <person name="Eswara Moorthy P."/>
            <person name="Siefert J."/>
            <person name="Uzman A."/>
            <person name="Buzumbo P."/>
            <person name="Verma A."/>
            <person name="Zwiya H."/>
            <person name="McWilliams B.D."/>
            <person name="Olowu A."/>
            <person name="Clinkenbeard K.D."/>
            <person name="Newcombe D."/>
            <person name="Golebiewski L."/>
            <person name="Petrosino J.F."/>
            <person name="Nicholson W.L."/>
            <person name="Fox G.E."/>
            <person name="Venkateswaran K."/>
            <person name="Highlander S.K."/>
            <person name="Weinstock G.M."/>
        </authorList>
    </citation>
    <scope>NUCLEOTIDE SEQUENCE [LARGE SCALE GENOMIC DNA]</scope>
    <source>
        <strain>SAFR-032</strain>
    </source>
</reference>
<keyword id="KW-0456">Lyase</keyword>
<keyword id="KW-0663">Pyridoxal phosphate</keyword>
<keyword id="KW-0704">Schiff base</keyword>
<proteinExistence type="inferred from homology"/>
<organism>
    <name type="scientific">Bacillus pumilus (strain SAFR-032)</name>
    <dbReference type="NCBI Taxonomy" id="315750"/>
    <lineage>
        <taxon>Bacteria</taxon>
        <taxon>Bacillati</taxon>
        <taxon>Bacillota</taxon>
        <taxon>Bacilli</taxon>
        <taxon>Bacillales</taxon>
        <taxon>Bacillaceae</taxon>
        <taxon>Bacillus</taxon>
    </lineage>
</organism>
<dbReference type="EC" id="4.3.3.6" evidence="1"/>
<dbReference type="EMBL" id="CP000813">
    <property type="protein sequence ID" value="ABV61202.1"/>
    <property type="molecule type" value="Genomic_DNA"/>
</dbReference>
<dbReference type="RefSeq" id="WP_012009058.1">
    <property type="nucleotide sequence ID" value="NC_009848.4"/>
</dbReference>
<dbReference type="SMR" id="A8FAD5"/>
<dbReference type="STRING" id="315750.BPUM_0507"/>
<dbReference type="GeneID" id="5619224"/>
<dbReference type="KEGG" id="bpu:BPUM_0507"/>
<dbReference type="eggNOG" id="COG0214">
    <property type="taxonomic scope" value="Bacteria"/>
</dbReference>
<dbReference type="HOGENOM" id="CLU_055352_1_0_9"/>
<dbReference type="OrthoDB" id="9772545at2"/>
<dbReference type="UniPathway" id="UPA00245"/>
<dbReference type="Proteomes" id="UP000001355">
    <property type="component" value="Chromosome"/>
</dbReference>
<dbReference type="GO" id="GO:0036381">
    <property type="term" value="F:pyridoxal 5'-phosphate synthase (glutamine hydrolysing) activity"/>
    <property type="evidence" value="ECO:0007669"/>
    <property type="project" value="UniProtKB-UniRule"/>
</dbReference>
<dbReference type="GO" id="GO:0006520">
    <property type="term" value="P:amino acid metabolic process"/>
    <property type="evidence" value="ECO:0007669"/>
    <property type="project" value="TreeGrafter"/>
</dbReference>
<dbReference type="GO" id="GO:0042823">
    <property type="term" value="P:pyridoxal phosphate biosynthetic process"/>
    <property type="evidence" value="ECO:0007669"/>
    <property type="project" value="UniProtKB-UniRule"/>
</dbReference>
<dbReference type="GO" id="GO:0008615">
    <property type="term" value="P:pyridoxine biosynthetic process"/>
    <property type="evidence" value="ECO:0007669"/>
    <property type="project" value="TreeGrafter"/>
</dbReference>
<dbReference type="CDD" id="cd04727">
    <property type="entry name" value="pdxS"/>
    <property type="match status" value="1"/>
</dbReference>
<dbReference type="FunFam" id="3.20.20.70:FF:000001">
    <property type="entry name" value="Pyridoxine biosynthesis protein PDX1"/>
    <property type="match status" value="1"/>
</dbReference>
<dbReference type="Gene3D" id="3.20.20.70">
    <property type="entry name" value="Aldolase class I"/>
    <property type="match status" value="1"/>
</dbReference>
<dbReference type="HAMAP" id="MF_01824">
    <property type="entry name" value="PdxS"/>
    <property type="match status" value="1"/>
</dbReference>
<dbReference type="InterPro" id="IPR013785">
    <property type="entry name" value="Aldolase_TIM"/>
</dbReference>
<dbReference type="InterPro" id="IPR001852">
    <property type="entry name" value="PdxS/SNZ"/>
</dbReference>
<dbReference type="InterPro" id="IPR033755">
    <property type="entry name" value="PdxS/SNZ_N"/>
</dbReference>
<dbReference type="InterPro" id="IPR011060">
    <property type="entry name" value="RibuloseP-bd_barrel"/>
</dbReference>
<dbReference type="NCBIfam" id="NF003215">
    <property type="entry name" value="PRK04180.1"/>
    <property type="match status" value="1"/>
</dbReference>
<dbReference type="NCBIfam" id="TIGR00343">
    <property type="entry name" value="pyridoxal 5'-phosphate synthase lyase subunit PdxS"/>
    <property type="match status" value="1"/>
</dbReference>
<dbReference type="PANTHER" id="PTHR31829">
    <property type="entry name" value="PYRIDOXAL 5'-PHOSPHATE SYNTHASE SUBUNIT SNZ1-RELATED"/>
    <property type="match status" value="1"/>
</dbReference>
<dbReference type="PANTHER" id="PTHR31829:SF0">
    <property type="entry name" value="PYRIDOXAL 5'-PHOSPHATE SYNTHASE SUBUNIT SNZ1-RELATED"/>
    <property type="match status" value="1"/>
</dbReference>
<dbReference type="Pfam" id="PF01680">
    <property type="entry name" value="SOR_SNZ"/>
    <property type="match status" value="1"/>
</dbReference>
<dbReference type="PIRSF" id="PIRSF029271">
    <property type="entry name" value="Pdx1"/>
    <property type="match status" value="1"/>
</dbReference>
<dbReference type="SUPFAM" id="SSF51366">
    <property type="entry name" value="Ribulose-phoshate binding barrel"/>
    <property type="match status" value="1"/>
</dbReference>
<dbReference type="PROSITE" id="PS01235">
    <property type="entry name" value="PDXS_SNZ_1"/>
    <property type="match status" value="1"/>
</dbReference>
<dbReference type="PROSITE" id="PS51129">
    <property type="entry name" value="PDXS_SNZ_2"/>
    <property type="match status" value="1"/>
</dbReference>
<name>PDXS_BACP2</name>
<gene>
    <name evidence="1" type="primary">pdxS</name>
    <name type="ordered locus">BPUM_0507</name>
</gene>